<protein>
    <recommendedName>
        <fullName evidence="1">Large ribosomal subunit protein uL3</fullName>
    </recommendedName>
    <alternativeName>
        <fullName evidence="2">50S ribosomal protein L3</fullName>
    </alternativeName>
</protein>
<gene>
    <name evidence="1" type="primary">rplC</name>
    <name type="ordered locus">Spea_0184</name>
</gene>
<name>RL3_SHEPA</name>
<feature type="chain" id="PRO_1000086461" description="Large ribosomal subunit protein uL3">
    <location>
        <begin position="1"/>
        <end position="212"/>
    </location>
</feature>
<feature type="modified residue" description="N5-methylglutamine" evidence="1">
    <location>
        <position position="153"/>
    </location>
</feature>
<proteinExistence type="inferred from homology"/>
<evidence type="ECO:0000255" key="1">
    <source>
        <dbReference type="HAMAP-Rule" id="MF_01325"/>
    </source>
</evidence>
<evidence type="ECO:0000305" key="2"/>
<reference key="1">
    <citation type="submission" date="2007-10" db="EMBL/GenBank/DDBJ databases">
        <title>Complete sequence of Shewanella pealeana ATCC 700345.</title>
        <authorList>
            <consortium name="US DOE Joint Genome Institute"/>
            <person name="Copeland A."/>
            <person name="Lucas S."/>
            <person name="Lapidus A."/>
            <person name="Barry K."/>
            <person name="Glavina del Rio T."/>
            <person name="Dalin E."/>
            <person name="Tice H."/>
            <person name="Pitluck S."/>
            <person name="Chertkov O."/>
            <person name="Brettin T."/>
            <person name="Bruce D."/>
            <person name="Detter J.C."/>
            <person name="Han C."/>
            <person name="Schmutz J."/>
            <person name="Larimer F."/>
            <person name="Land M."/>
            <person name="Hauser L."/>
            <person name="Kyrpides N."/>
            <person name="Kim E."/>
            <person name="Zhao J.-S.Z."/>
            <person name="Manno D."/>
            <person name="Hawari J."/>
            <person name="Richardson P."/>
        </authorList>
    </citation>
    <scope>NUCLEOTIDE SEQUENCE [LARGE SCALE GENOMIC DNA]</scope>
    <source>
        <strain>ATCC 700345 / ANG-SQ1</strain>
    </source>
</reference>
<comment type="function">
    <text evidence="1">One of the primary rRNA binding proteins, it binds directly near the 3'-end of the 23S rRNA, where it nucleates assembly of the 50S subunit.</text>
</comment>
<comment type="subunit">
    <text evidence="1">Part of the 50S ribosomal subunit. Forms a cluster with proteins L14 and L19.</text>
</comment>
<comment type="PTM">
    <text evidence="1">Methylated by PrmB.</text>
</comment>
<comment type="similarity">
    <text evidence="1">Belongs to the universal ribosomal protein uL3 family.</text>
</comment>
<organism>
    <name type="scientific">Shewanella pealeana (strain ATCC 700345 / ANG-SQ1)</name>
    <dbReference type="NCBI Taxonomy" id="398579"/>
    <lineage>
        <taxon>Bacteria</taxon>
        <taxon>Pseudomonadati</taxon>
        <taxon>Pseudomonadota</taxon>
        <taxon>Gammaproteobacteria</taxon>
        <taxon>Alteromonadales</taxon>
        <taxon>Shewanellaceae</taxon>
        <taxon>Shewanella</taxon>
    </lineage>
</organism>
<dbReference type="EMBL" id="CP000851">
    <property type="protein sequence ID" value="ABV85513.1"/>
    <property type="molecule type" value="Genomic_DNA"/>
</dbReference>
<dbReference type="RefSeq" id="WP_012153457.1">
    <property type="nucleotide sequence ID" value="NC_009901.1"/>
</dbReference>
<dbReference type="SMR" id="A8GYX6"/>
<dbReference type="STRING" id="398579.Spea_0184"/>
<dbReference type="KEGG" id="spl:Spea_0184"/>
<dbReference type="eggNOG" id="COG0087">
    <property type="taxonomic scope" value="Bacteria"/>
</dbReference>
<dbReference type="HOGENOM" id="CLU_044142_4_1_6"/>
<dbReference type="OrthoDB" id="9806135at2"/>
<dbReference type="Proteomes" id="UP000002608">
    <property type="component" value="Chromosome"/>
</dbReference>
<dbReference type="GO" id="GO:0022625">
    <property type="term" value="C:cytosolic large ribosomal subunit"/>
    <property type="evidence" value="ECO:0007669"/>
    <property type="project" value="TreeGrafter"/>
</dbReference>
<dbReference type="GO" id="GO:0019843">
    <property type="term" value="F:rRNA binding"/>
    <property type="evidence" value="ECO:0007669"/>
    <property type="project" value="UniProtKB-UniRule"/>
</dbReference>
<dbReference type="GO" id="GO:0003735">
    <property type="term" value="F:structural constituent of ribosome"/>
    <property type="evidence" value="ECO:0007669"/>
    <property type="project" value="InterPro"/>
</dbReference>
<dbReference type="GO" id="GO:0006412">
    <property type="term" value="P:translation"/>
    <property type="evidence" value="ECO:0007669"/>
    <property type="project" value="UniProtKB-UniRule"/>
</dbReference>
<dbReference type="FunFam" id="2.40.30.10:FF:000004">
    <property type="entry name" value="50S ribosomal protein L3"/>
    <property type="match status" value="1"/>
</dbReference>
<dbReference type="FunFam" id="3.30.160.810:FF:000001">
    <property type="entry name" value="50S ribosomal protein L3"/>
    <property type="match status" value="1"/>
</dbReference>
<dbReference type="Gene3D" id="3.30.160.810">
    <property type="match status" value="1"/>
</dbReference>
<dbReference type="Gene3D" id="2.40.30.10">
    <property type="entry name" value="Translation factors"/>
    <property type="match status" value="1"/>
</dbReference>
<dbReference type="HAMAP" id="MF_01325_B">
    <property type="entry name" value="Ribosomal_uL3_B"/>
    <property type="match status" value="1"/>
</dbReference>
<dbReference type="InterPro" id="IPR000597">
    <property type="entry name" value="Ribosomal_uL3"/>
</dbReference>
<dbReference type="InterPro" id="IPR019927">
    <property type="entry name" value="Ribosomal_uL3_bac/org-type"/>
</dbReference>
<dbReference type="InterPro" id="IPR019926">
    <property type="entry name" value="Ribosomal_uL3_CS"/>
</dbReference>
<dbReference type="InterPro" id="IPR009000">
    <property type="entry name" value="Transl_B-barrel_sf"/>
</dbReference>
<dbReference type="NCBIfam" id="TIGR03625">
    <property type="entry name" value="L3_bact"/>
    <property type="match status" value="1"/>
</dbReference>
<dbReference type="PANTHER" id="PTHR11229">
    <property type="entry name" value="50S RIBOSOMAL PROTEIN L3"/>
    <property type="match status" value="1"/>
</dbReference>
<dbReference type="PANTHER" id="PTHR11229:SF16">
    <property type="entry name" value="LARGE RIBOSOMAL SUBUNIT PROTEIN UL3C"/>
    <property type="match status" value="1"/>
</dbReference>
<dbReference type="Pfam" id="PF00297">
    <property type="entry name" value="Ribosomal_L3"/>
    <property type="match status" value="1"/>
</dbReference>
<dbReference type="SUPFAM" id="SSF50447">
    <property type="entry name" value="Translation proteins"/>
    <property type="match status" value="1"/>
</dbReference>
<dbReference type="PROSITE" id="PS00474">
    <property type="entry name" value="RIBOSOMAL_L3"/>
    <property type="match status" value="1"/>
</dbReference>
<keyword id="KW-0488">Methylation</keyword>
<keyword id="KW-1185">Reference proteome</keyword>
<keyword id="KW-0687">Ribonucleoprotein</keyword>
<keyword id="KW-0689">Ribosomal protein</keyword>
<keyword id="KW-0694">RNA-binding</keyword>
<keyword id="KW-0699">rRNA-binding</keyword>
<accession>A8GYX6</accession>
<sequence length="212" mass="22456">MAIGLIGRKVGMTRIFNEDGASVPVTVIEIAANRVTQVRTLDTDGYRALQVTTGTKKANRITKPEAGHFAKAGVEAGRGLWEMRLADGEGEGIEVGAELNVDIFADIAKVDVTGQSKGKGFQGGIKRWNFATQDATHGNSLAHRANGSIGQNQTPGRVFKGKKMSGHMGAERVTTQNLEVIRVDAERNLLLVKGAVPGATNGDLIIKPAVKA</sequence>